<reference key="1">
    <citation type="journal article" date="2000" name="DNA Res.">
        <title>Structural analysis of Arabidopsis thaliana chromosome 5. X. Sequence features of the regions of 3,076,755 bp covered by sixty P1 and TAC clones.</title>
        <authorList>
            <person name="Sato S."/>
            <person name="Nakamura Y."/>
            <person name="Kaneko T."/>
            <person name="Katoh T."/>
            <person name="Asamizu E."/>
            <person name="Kotani H."/>
            <person name="Tabata S."/>
        </authorList>
    </citation>
    <scope>NUCLEOTIDE SEQUENCE [LARGE SCALE GENOMIC DNA]</scope>
    <source>
        <strain>cv. Columbia</strain>
    </source>
</reference>
<reference key="2">
    <citation type="journal article" date="2017" name="Plant J.">
        <title>Araport11: a complete reannotation of the Arabidopsis thaliana reference genome.</title>
        <authorList>
            <person name="Cheng C.Y."/>
            <person name="Krishnakumar V."/>
            <person name="Chan A.P."/>
            <person name="Thibaud-Nissen F."/>
            <person name="Schobel S."/>
            <person name="Town C.D."/>
        </authorList>
    </citation>
    <scope>GENOME REANNOTATION</scope>
    <source>
        <strain>cv. Columbia</strain>
    </source>
</reference>
<reference key="3">
    <citation type="journal article" date="2003" name="Science">
        <title>Empirical analysis of transcriptional activity in the Arabidopsis genome.</title>
        <authorList>
            <person name="Yamada K."/>
            <person name="Lim J."/>
            <person name="Dale J.M."/>
            <person name="Chen H."/>
            <person name="Shinn P."/>
            <person name="Palm C.J."/>
            <person name="Southwick A.M."/>
            <person name="Wu H.C."/>
            <person name="Kim C.J."/>
            <person name="Nguyen M."/>
            <person name="Pham P.K."/>
            <person name="Cheuk R.F."/>
            <person name="Karlin-Newmann G."/>
            <person name="Liu S.X."/>
            <person name="Lam B."/>
            <person name="Sakano H."/>
            <person name="Wu T."/>
            <person name="Yu G."/>
            <person name="Miranda M."/>
            <person name="Quach H.L."/>
            <person name="Tripp M."/>
            <person name="Chang C.H."/>
            <person name="Lee J.M."/>
            <person name="Toriumi M.J."/>
            <person name="Chan M.M."/>
            <person name="Tang C.C."/>
            <person name="Onodera C.S."/>
            <person name="Deng J.M."/>
            <person name="Akiyama K."/>
            <person name="Ansari Y."/>
            <person name="Arakawa T."/>
            <person name="Banh J."/>
            <person name="Banno F."/>
            <person name="Bowser L."/>
            <person name="Brooks S.Y."/>
            <person name="Carninci P."/>
            <person name="Chao Q."/>
            <person name="Choy N."/>
            <person name="Enju A."/>
            <person name="Goldsmith A.D."/>
            <person name="Gurjal M."/>
            <person name="Hansen N.F."/>
            <person name="Hayashizaki Y."/>
            <person name="Johnson-Hopson C."/>
            <person name="Hsuan V.W."/>
            <person name="Iida K."/>
            <person name="Karnes M."/>
            <person name="Khan S."/>
            <person name="Koesema E."/>
            <person name="Ishida J."/>
            <person name="Jiang P.X."/>
            <person name="Jones T."/>
            <person name="Kawai J."/>
            <person name="Kamiya A."/>
            <person name="Meyers C."/>
            <person name="Nakajima M."/>
            <person name="Narusaka M."/>
            <person name="Seki M."/>
            <person name="Sakurai T."/>
            <person name="Satou M."/>
            <person name="Tamse R."/>
            <person name="Vaysberg M."/>
            <person name="Wallender E.K."/>
            <person name="Wong C."/>
            <person name="Yamamura Y."/>
            <person name="Yuan S."/>
            <person name="Shinozaki K."/>
            <person name="Davis R.W."/>
            <person name="Theologis A."/>
            <person name="Ecker J.R."/>
        </authorList>
    </citation>
    <scope>NUCLEOTIDE SEQUENCE [LARGE SCALE MRNA]</scope>
    <source>
        <strain>cv. Columbia</strain>
    </source>
</reference>
<reference key="4">
    <citation type="submission" date="2002-03" db="EMBL/GenBank/DDBJ databases">
        <title>Full-length cDNA from Arabidopsis thaliana.</title>
        <authorList>
            <person name="Brover V.V."/>
            <person name="Troukhan M.E."/>
            <person name="Alexandrov N.A."/>
            <person name="Lu Y.-P."/>
            <person name="Flavell R.B."/>
            <person name="Feldmann K.A."/>
        </authorList>
    </citation>
    <scope>NUCLEOTIDE SEQUENCE [LARGE SCALE MRNA]</scope>
</reference>
<reference key="5">
    <citation type="journal article" date="2023" name="Plant Cell">
        <title>An updated nomenclature for plant ribosomal protein genes.</title>
        <authorList>
            <person name="Scarpin M.R."/>
            <person name="Busche M."/>
            <person name="Martinez R.E."/>
            <person name="Harper L.C."/>
            <person name="Reiser L."/>
            <person name="Szakonyi D."/>
            <person name="Merchante C."/>
            <person name="Lan T."/>
            <person name="Xiong W."/>
            <person name="Mo B."/>
            <person name="Tang G."/>
            <person name="Chen X."/>
            <person name="Bailey-Serres J."/>
            <person name="Browning K.S."/>
            <person name="Brunkard J.O."/>
        </authorList>
    </citation>
    <scope>NOMENCLATURE</scope>
</reference>
<gene>
    <name type="ordered locus">At5g47190</name>
    <name type="ORF">MQL5.4</name>
</gene>
<dbReference type="EMBL" id="AB018117">
    <property type="protein sequence ID" value="BAA97152.1"/>
    <property type="status" value="ALT_SEQ"/>
    <property type="molecule type" value="Genomic_DNA"/>
</dbReference>
<dbReference type="EMBL" id="CP002688">
    <property type="protein sequence ID" value="AED95482.1"/>
    <property type="molecule type" value="Genomic_DNA"/>
</dbReference>
<dbReference type="EMBL" id="AY080626">
    <property type="protein sequence ID" value="AAL85972.1"/>
    <property type="molecule type" value="mRNA"/>
</dbReference>
<dbReference type="EMBL" id="AY117181">
    <property type="protein sequence ID" value="AAM51256.1"/>
    <property type="molecule type" value="mRNA"/>
</dbReference>
<dbReference type="EMBL" id="AY086970">
    <property type="protein sequence ID" value="AAM64533.1"/>
    <property type="molecule type" value="mRNA"/>
</dbReference>
<dbReference type="RefSeq" id="NP_568677.1">
    <property type="nucleotide sequence ID" value="NM_124090.3"/>
</dbReference>
<dbReference type="SMR" id="Q8RXX5"/>
<dbReference type="BioGRID" id="20013">
    <property type="interactions" value="1"/>
</dbReference>
<dbReference type="FunCoup" id="Q8RXX5">
    <property type="interactions" value="1104"/>
</dbReference>
<dbReference type="STRING" id="3702.Q8RXX5"/>
<dbReference type="PaxDb" id="3702-AT5G47190.1"/>
<dbReference type="ProteomicsDB" id="236952"/>
<dbReference type="EnsemblPlants" id="AT5G47190.1">
    <property type="protein sequence ID" value="AT5G47190.1"/>
    <property type="gene ID" value="AT5G47190"/>
</dbReference>
<dbReference type="GeneID" id="834765"/>
<dbReference type="Gramene" id="AT5G47190.1">
    <property type="protein sequence ID" value="AT5G47190.1"/>
    <property type="gene ID" value="AT5G47190"/>
</dbReference>
<dbReference type="KEGG" id="ath:AT5G47190"/>
<dbReference type="Araport" id="AT5G47190"/>
<dbReference type="TAIR" id="AT5G47190">
    <property type="gene designation" value="PRPL19"/>
</dbReference>
<dbReference type="eggNOG" id="KOG1698">
    <property type="taxonomic scope" value="Eukaryota"/>
</dbReference>
<dbReference type="HOGENOM" id="CLU_076458_2_1_1"/>
<dbReference type="InParanoid" id="Q8RXX5"/>
<dbReference type="OMA" id="IVMSKQN"/>
<dbReference type="PhylomeDB" id="Q8RXX5"/>
<dbReference type="PRO" id="PR:Q8RXX5"/>
<dbReference type="Proteomes" id="UP000006548">
    <property type="component" value="Chromosome 5"/>
</dbReference>
<dbReference type="ExpressionAtlas" id="Q8RXX5">
    <property type="expression patterns" value="baseline and differential"/>
</dbReference>
<dbReference type="GO" id="GO:0009507">
    <property type="term" value="C:chloroplast"/>
    <property type="evidence" value="ECO:0007005"/>
    <property type="project" value="TAIR"/>
</dbReference>
<dbReference type="GO" id="GO:0009941">
    <property type="term" value="C:chloroplast envelope"/>
    <property type="evidence" value="ECO:0007005"/>
    <property type="project" value="TAIR"/>
</dbReference>
<dbReference type="GO" id="GO:0009570">
    <property type="term" value="C:chloroplast stroma"/>
    <property type="evidence" value="ECO:0007005"/>
    <property type="project" value="TAIR"/>
</dbReference>
<dbReference type="GO" id="GO:0009536">
    <property type="term" value="C:plastid"/>
    <property type="evidence" value="ECO:0007005"/>
    <property type="project" value="TAIR"/>
</dbReference>
<dbReference type="GO" id="GO:1990904">
    <property type="term" value="C:ribonucleoprotein complex"/>
    <property type="evidence" value="ECO:0007669"/>
    <property type="project" value="UniProtKB-KW"/>
</dbReference>
<dbReference type="GO" id="GO:0005840">
    <property type="term" value="C:ribosome"/>
    <property type="evidence" value="ECO:0007669"/>
    <property type="project" value="UniProtKB-KW"/>
</dbReference>
<dbReference type="GO" id="GO:0003729">
    <property type="term" value="F:mRNA binding"/>
    <property type="evidence" value="ECO:0000314"/>
    <property type="project" value="TAIR"/>
</dbReference>
<dbReference type="GO" id="GO:0019843">
    <property type="term" value="F:rRNA binding"/>
    <property type="evidence" value="ECO:0007669"/>
    <property type="project" value="UniProtKB-KW"/>
</dbReference>
<dbReference type="GO" id="GO:0003735">
    <property type="term" value="F:structural constituent of ribosome"/>
    <property type="evidence" value="ECO:0007669"/>
    <property type="project" value="InterPro"/>
</dbReference>
<dbReference type="GO" id="GO:0006412">
    <property type="term" value="P:translation"/>
    <property type="evidence" value="ECO:0007669"/>
    <property type="project" value="InterPro"/>
</dbReference>
<dbReference type="FunFam" id="2.30.30.790:FF:000004">
    <property type="entry name" value="50S ribosomal protein L19, chloroplastic"/>
    <property type="match status" value="1"/>
</dbReference>
<dbReference type="Gene3D" id="2.30.30.790">
    <property type="match status" value="1"/>
</dbReference>
<dbReference type="InterPro" id="IPR001857">
    <property type="entry name" value="Ribosomal_bL19"/>
</dbReference>
<dbReference type="InterPro" id="IPR038657">
    <property type="entry name" value="Ribosomal_bL19_sf"/>
</dbReference>
<dbReference type="InterPro" id="IPR008991">
    <property type="entry name" value="Translation_prot_SH3-like_sf"/>
</dbReference>
<dbReference type="NCBIfam" id="TIGR01024">
    <property type="entry name" value="rplS_bact"/>
    <property type="match status" value="1"/>
</dbReference>
<dbReference type="PANTHER" id="PTHR15680:SF10">
    <property type="entry name" value="LARGE RIBOSOMAL SUBUNIT PROTEIN BL19CY-RELATED"/>
    <property type="match status" value="1"/>
</dbReference>
<dbReference type="PANTHER" id="PTHR15680">
    <property type="entry name" value="RIBOSOMAL PROTEIN L19"/>
    <property type="match status" value="1"/>
</dbReference>
<dbReference type="Pfam" id="PF01245">
    <property type="entry name" value="Ribosomal_L19"/>
    <property type="match status" value="1"/>
</dbReference>
<dbReference type="PRINTS" id="PR00061">
    <property type="entry name" value="RIBOSOMALL19"/>
</dbReference>
<dbReference type="SUPFAM" id="SSF50104">
    <property type="entry name" value="Translation proteins SH3-like domain"/>
    <property type="match status" value="1"/>
</dbReference>
<feature type="transit peptide" description="Chloroplast" evidence="1">
    <location>
        <begin position="1"/>
        <end position="70"/>
    </location>
</feature>
<feature type="chain" id="PRO_0000249235" description="Large ribosomal subunit protein bL19cy">
    <location>
        <begin position="71"/>
        <end position="229"/>
    </location>
</feature>
<feature type="sequence conflict" description="In Ref. 4; AAM64533." evidence="3" ref="4">
    <original>K</original>
    <variation>R</variation>
    <location>
        <position position="66"/>
    </location>
</feature>
<protein>
    <recommendedName>
        <fullName evidence="2">Large ribosomal subunit protein bL19cy</fullName>
    </recommendedName>
    <alternativeName>
        <fullName>50S ribosomal protein L19-2, chloroplastic</fullName>
    </alternativeName>
</protein>
<name>RK192_ARATH</name>
<sequence length="229" mass="25469">MATSSHLLPQALHMIPRTPSFSSKNLGVSSILPRASSVNSRLSVSRVFLNHSSSNFGFAIDSKKRKEFIAKAEESTEGETEAVVENAVETEAEGEGEATVAAEEAKPPWKTRVKLGDIMGLLNKKAIEVAETVRPVPGLRTGDIVEIKLEVPENKRRLSIYKGIVMSRQNAGIHTTIRIRRIIAGIGVEIVFPIYSPNIKEIKVVSHRKVRRARLYYLRDKLPRLSTFK</sequence>
<comment type="function">
    <text evidence="1">Located at the 30S-50S ribosomal subunit interface and binds directly to 23S ribosomal RNA.</text>
</comment>
<comment type="subunit">
    <text evidence="1">Part of the 50S ribosomal subunit.</text>
</comment>
<comment type="subcellular location">
    <subcellularLocation>
        <location>Plastid</location>
        <location>Chloroplast</location>
    </subcellularLocation>
</comment>
<comment type="similarity">
    <text evidence="3">Belongs to the bacterial ribosomal protein bL19 family.</text>
</comment>
<comment type="sequence caution" evidence="3">
    <conflict type="erroneous gene model prediction">
        <sequence resource="EMBL-CDS" id="BAA97152"/>
    </conflict>
</comment>
<accession>Q8RXX5</accession>
<accession>Q8LBV7</accession>
<accession>Q9LVU0</accession>
<proteinExistence type="evidence at transcript level"/>
<evidence type="ECO:0000250" key="1"/>
<evidence type="ECO:0000303" key="2">
    <source>
    </source>
</evidence>
<evidence type="ECO:0000305" key="3"/>
<keyword id="KW-0150">Chloroplast</keyword>
<keyword id="KW-0934">Plastid</keyword>
<keyword id="KW-1185">Reference proteome</keyword>
<keyword id="KW-0687">Ribonucleoprotein</keyword>
<keyword id="KW-0689">Ribosomal protein</keyword>
<keyword id="KW-0694">RNA-binding</keyword>
<keyword id="KW-0699">rRNA-binding</keyword>
<keyword id="KW-0809">Transit peptide</keyword>
<organism>
    <name type="scientific">Arabidopsis thaliana</name>
    <name type="common">Mouse-ear cress</name>
    <dbReference type="NCBI Taxonomy" id="3702"/>
    <lineage>
        <taxon>Eukaryota</taxon>
        <taxon>Viridiplantae</taxon>
        <taxon>Streptophyta</taxon>
        <taxon>Embryophyta</taxon>
        <taxon>Tracheophyta</taxon>
        <taxon>Spermatophyta</taxon>
        <taxon>Magnoliopsida</taxon>
        <taxon>eudicotyledons</taxon>
        <taxon>Gunneridae</taxon>
        <taxon>Pentapetalae</taxon>
        <taxon>rosids</taxon>
        <taxon>malvids</taxon>
        <taxon>Brassicales</taxon>
        <taxon>Brassicaceae</taxon>
        <taxon>Camelineae</taxon>
        <taxon>Arabidopsis</taxon>
    </lineage>
</organism>